<reference key="1">
    <citation type="journal article" date="1992" name="Differentiation">
        <title>Identification of plakoglobin in oocytes and early embryos of Xenopus laevis: maternal expression of a gene encoding a junctional plaque protein.</title>
        <authorList>
            <person name="Fouquet B."/>
            <person name="Zimbelmann R."/>
            <person name="Franke W.W."/>
        </authorList>
    </citation>
    <scope>NUCLEOTIDE SEQUENCE [MRNA]</scope>
</reference>
<reference key="2">
    <citation type="submission" date="2005-04" db="EMBL/GenBank/DDBJ databases">
        <authorList>
            <consortium name="NIH - Xenopus Gene Collection (XGC) project"/>
        </authorList>
    </citation>
    <scope>NUCLEOTIDE SEQUENCE [LARGE SCALE MRNA]</scope>
    <source>
        <tissue>Eye</tissue>
    </source>
</reference>
<reference key="3">
    <citation type="journal article" date="1992" name="Dev. Biol.">
        <title>The armadillo homologs beta-catenin and plakoglobin are differentially expressed during early development of Xenopus laevis.</title>
        <authorList>
            <person name="de Marais A.A."/>
            <person name="Moon R.T."/>
        </authorList>
    </citation>
    <scope>NUCLEOTIDE SEQUENCE [MRNA] OF 133-292</scope>
</reference>
<feature type="chain" id="PRO_0000064282" description="Junction plakoglobin">
    <location>
        <begin position="1"/>
        <end position="738"/>
    </location>
</feature>
<feature type="repeat" description="ARM 1">
    <location>
        <begin position="128"/>
        <end position="167"/>
    </location>
</feature>
<feature type="repeat" description="ARM 2">
    <location>
        <begin position="168"/>
        <end position="211"/>
    </location>
</feature>
<feature type="repeat" description="ARM 3">
    <location>
        <begin position="212"/>
        <end position="251"/>
    </location>
</feature>
<feature type="repeat" description="ARM 4">
    <location>
        <begin position="254"/>
        <end position="293"/>
    </location>
</feature>
<feature type="repeat" description="ARM 5">
    <location>
        <begin position="294"/>
        <end position="337"/>
    </location>
</feature>
<feature type="repeat" description="ARM 6">
    <location>
        <begin position="338"/>
        <end position="377"/>
    </location>
</feature>
<feature type="repeat" description="ARM 7">
    <location>
        <begin position="379"/>
        <end position="416"/>
    </location>
</feature>
<feature type="repeat" description="ARM 8">
    <location>
        <begin position="419"/>
        <end position="460"/>
    </location>
</feature>
<feature type="repeat" description="ARM 9">
    <location>
        <begin position="466"/>
        <end position="506"/>
    </location>
</feature>
<feature type="repeat" description="ARM 10">
    <location>
        <begin position="508"/>
        <end position="547"/>
    </location>
</feature>
<feature type="repeat" description="ARM 11">
    <location>
        <begin position="570"/>
        <end position="609"/>
    </location>
</feature>
<feature type="repeat" description="ARM 12">
    <location>
        <begin position="611"/>
        <end position="657"/>
    </location>
</feature>
<feature type="sequence conflict" description="In Ref. 3; CAA47463." evidence="3" ref="3">
    <original>I</original>
    <variation>V</variation>
    <location>
        <position position="185"/>
    </location>
</feature>
<feature type="sequence conflict" description="In Ref. 3; CAA47463." evidence="3" ref="3">
    <original>A</original>
    <variation>T</variation>
    <location>
        <position position="226"/>
    </location>
</feature>
<evidence type="ECO:0000250" key="1">
    <source>
        <dbReference type="UniProtKB" id="P14923"/>
    </source>
</evidence>
<evidence type="ECO:0000250" key="2">
    <source>
        <dbReference type="UniProtKB" id="Q9PVF7"/>
    </source>
</evidence>
<evidence type="ECO:0000305" key="3"/>
<accession>P30998</accession>
<accession>Q52L07</accession>
<sequence>MDLGDVVEMPMKVTEWQKTYTYDSGINSGINTSVPSLNGKMVIEDDSLAYPNSYTTVKTTTYTQQQNPDMESHLNMTRAQRVRAAMYPETVEDHSYLFSTQIEGQQTNVQKLAEPSQMLKSAIMHLINYQDDAELATRAIPELTKLLNDEDPMVVNKASMIVNQLSKKEASRKALMQSPQIVAAIVRTMQHTSDMDTARCTTSILHNLSHHREGLLSIFKSGGIPALVRMLSSPVESVLFYAITTLHNLLLYQEGAKMAVRLADGLQKMVPLLNKNNPKFLAITTDCLQLLAYGNQESKLIILGNGGPQGLVQIMRNYNYEKLLWTTSRVLKVLSVCPSNKPAIVEAGGMQALGKHLTSNSPRLVQNCLWTLRNLSDVATKQEGLDNVLKILVNQLSSDDVNVLTCATGTLSNLTCNNGRNKTLVTQSNGVESLIHTILRASDKDDIAEPAVCAMRHLTSRHQDAEVAQNSVRLHYGIPAIVKLLNPPYQWPLVKATIGLIRNLALCPANHAPLYDAGVIPRLVQLLVKSHQDAQRHAASGTQQPYTDGVKMEEIVEGCTGALHILARDPVNRMDIYKLNTIPLFVQLLYSPVENIQRVSSGVLCELAQDKEAADTIDAEGASAPLMELLHSRNEGIATYAAAVLFRISEDKNADYRKRVSVELTNAIFRQDPAAWEAAQSMIPLNDPYSDEMENYRAMYPEDIPLEPMGGDMDVEYAMDGYSDHPGRGHYADNHMMA</sequence>
<dbReference type="EMBL" id="M95593">
    <property type="protein sequence ID" value="AAA49931.1"/>
    <property type="molecule type" value="mRNA"/>
</dbReference>
<dbReference type="EMBL" id="BC094116">
    <property type="protein sequence ID" value="AAH94116.1"/>
    <property type="molecule type" value="mRNA"/>
</dbReference>
<dbReference type="EMBL" id="X67078">
    <property type="protein sequence ID" value="CAA47463.1"/>
    <property type="molecule type" value="mRNA"/>
</dbReference>
<dbReference type="PIR" id="S35093">
    <property type="entry name" value="S35093"/>
</dbReference>
<dbReference type="RefSeq" id="NP_001084051.1">
    <property type="nucleotide sequence ID" value="NM_001090582.1"/>
</dbReference>
<dbReference type="SMR" id="P30998"/>
<dbReference type="BioGRID" id="100603">
    <property type="interactions" value="1"/>
</dbReference>
<dbReference type="DNASU" id="399278"/>
<dbReference type="GeneID" id="399278"/>
<dbReference type="KEGG" id="xla:399278"/>
<dbReference type="AGR" id="Xenbase:XB-GENE-6254182"/>
<dbReference type="CTD" id="399278"/>
<dbReference type="Xenbase" id="XB-GENE-6254182">
    <property type="gene designation" value="jup.S"/>
</dbReference>
<dbReference type="OrthoDB" id="195736at2759"/>
<dbReference type="CD-CODE" id="78E86D56">
    <property type="entry name" value="Mitochondrial cloud"/>
</dbReference>
<dbReference type="Proteomes" id="UP000186698">
    <property type="component" value="Chromosome 9_10S"/>
</dbReference>
<dbReference type="Bgee" id="399278">
    <property type="expression patterns" value="Expressed in zone of skin and 19 other cell types or tissues"/>
</dbReference>
<dbReference type="GO" id="GO:0005912">
    <property type="term" value="C:adherens junction"/>
    <property type="evidence" value="ECO:0000318"/>
    <property type="project" value="GO_Central"/>
</dbReference>
<dbReference type="GO" id="GO:0016342">
    <property type="term" value="C:catenin complex"/>
    <property type="evidence" value="ECO:0000318"/>
    <property type="project" value="GO_Central"/>
</dbReference>
<dbReference type="GO" id="GO:0005737">
    <property type="term" value="C:cytoplasm"/>
    <property type="evidence" value="ECO:0000318"/>
    <property type="project" value="GO_Central"/>
</dbReference>
<dbReference type="GO" id="GO:0005856">
    <property type="term" value="C:cytoskeleton"/>
    <property type="evidence" value="ECO:0007669"/>
    <property type="project" value="UniProtKB-SubCell"/>
</dbReference>
<dbReference type="GO" id="GO:0030057">
    <property type="term" value="C:desmosome"/>
    <property type="evidence" value="ECO:0000250"/>
    <property type="project" value="UniProtKB"/>
</dbReference>
<dbReference type="GO" id="GO:0005634">
    <property type="term" value="C:nucleus"/>
    <property type="evidence" value="ECO:0000318"/>
    <property type="project" value="GO_Central"/>
</dbReference>
<dbReference type="GO" id="GO:0045294">
    <property type="term" value="F:alpha-catenin binding"/>
    <property type="evidence" value="ECO:0000318"/>
    <property type="project" value="GO_Central"/>
</dbReference>
<dbReference type="GO" id="GO:0045296">
    <property type="term" value="F:cadherin binding"/>
    <property type="evidence" value="ECO:0000318"/>
    <property type="project" value="GO_Central"/>
</dbReference>
<dbReference type="GO" id="GO:0016922">
    <property type="term" value="F:nuclear receptor binding"/>
    <property type="evidence" value="ECO:0000318"/>
    <property type="project" value="GO_Central"/>
</dbReference>
<dbReference type="GO" id="GO:0019903">
    <property type="term" value="F:protein phosphatase binding"/>
    <property type="evidence" value="ECO:0000318"/>
    <property type="project" value="GO_Central"/>
</dbReference>
<dbReference type="GO" id="GO:0003713">
    <property type="term" value="F:transcription coactivator activity"/>
    <property type="evidence" value="ECO:0000318"/>
    <property type="project" value="GO_Central"/>
</dbReference>
<dbReference type="GO" id="GO:0060070">
    <property type="term" value="P:canonical Wnt signaling pathway"/>
    <property type="evidence" value="ECO:0000318"/>
    <property type="project" value="GO_Central"/>
</dbReference>
<dbReference type="GO" id="GO:0098609">
    <property type="term" value="P:cell-cell adhesion"/>
    <property type="evidence" value="ECO:0000318"/>
    <property type="project" value="GO_Central"/>
</dbReference>
<dbReference type="GO" id="GO:0045944">
    <property type="term" value="P:positive regulation of transcription by RNA polymerase II"/>
    <property type="evidence" value="ECO:0000318"/>
    <property type="project" value="GO_Central"/>
</dbReference>
<dbReference type="CDD" id="cd21725">
    <property type="entry name" value="CTNNAbd_CTNNG"/>
    <property type="match status" value="1"/>
</dbReference>
<dbReference type="FunFam" id="1.25.10.10:FF:000015">
    <property type="entry name" value="Catenin beta-1"/>
    <property type="match status" value="1"/>
</dbReference>
<dbReference type="Gene3D" id="1.25.10.10">
    <property type="entry name" value="Leucine-rich Repeat Variant"/>
    <property type="match status" value="1"/>
</dbReference>
<dbReference type="InterPro" id="IPR011989">
    <property type="entry name" value="ARM-like"/>
</dbReference>
<dbReference type="InterPro" id="IPR016024">
    <property type="entry name" value="ARM-type_fold"/>
</dbReference>
<dbReference type="InterPro" id="IPR000225">
    <property type="entry name" value="Armadillo"/>
</dbReference>
<dbReference type="InterPro" id="IPR013284">
    <property type="entry name" value="Beta-catenin"/>
</dbReference>
<dbReference type="PANTHER" id="PTHR45976">
    <property type="entry name" value="ARMADILLO SEGMENT POLARITY PROTEIN"/>
    <property type="match status" value="1"/>
</dbReference>
<dbReference type="Pfam" id="PF00514">
    <property type="entry name" value="Arm"/>
    <property type="match status" value="3"/>
</dbReference>
<dbReference type="PRINTS" id="PR01869">
    <property type="entry name" value="BCATNINFAMLY"/>
</dbReference>
<dbReference type="SMART" id="SM00185">
    <property type="entry name" value="ARM"/>
    <property type="match status" value="12"/>
</dbReference>
<dbReference type="SUPFAM" id="SSF48371">
    <property type="entry name" value="ARM repeat"/>
    <property type="match status" value="1"/>
</dbReference>
<dbReference type="PROSITE" id="PS50176">
    <property type="entry name" value="ARM_REPEAT"/>
    <property type="match status" value="9"/>
</dbReference>
<organism>
    <name type="scientific">Xenopus laevis</name>
    <name type="common">African clawed frog</name>
    <dbReference type="NCBI Taxonomy" id="8355"/>
    <lineage>
        <taxon>Eukaryota</taxon>
        <taxon>Metazoa</taxon>
        <taxon>Chordata</taxon>
        <taxon>Craniata</taxon>
        <taxon>Vertebrata</taxon>
        <taxon>Euteleostomi</taxon>
        <taxon>Amphibia</taxon>
        <taxon>Batrachia</taxon>
        <taxon>Anura</taxon>
        <taxon>Pipoidea</taxon>
        <taxon>Pipidae</taxon>
        <taxon>Xenopodinae</taxon>
        <taxon>Xenopus</taxon>
        <taxon>Xenopus</taxon>
    </lineage>
</organism>
<gene>
    <name type="primary">jup</name>
</gene>
<keyword id="KW-0130">Cell adhesion</keyword>
<keyword id="KW-0965">Cell junction</keyword>
<keyword id="KW-0963">Cytoplasm</keyword>
<keyword id="KW-0206">Cytoskeleton</keyword>
<keyword id="KW-0472">Membrane</keyword>
<keyword id="KW-1185">Reference proteome</keyword>
<keyword id="KW-0677">Repeat</keyword>
<name>PLAK_XENLA</name>
<protein>
    <recommendedName>
        <fullName>Junction plakoglobin</fullName>
    </recommendedName>
    <alternativeName>
        <fullName>Desmoplakin III</fullName>
    </alternativeName>
    <alternativeName>
        <fullName>Desmoplakin-3</fullName>
    </alternativeName>
</protein>
<proteinExistence type="evidence at transcript level"/>
<comment type="function">
    <text>Common junctional plaque protein. The membrane-associated plaques are architectural elements in an important strategic position to influence the arrangement and function of both the cytoskeleton and the cells within the tissue. The presence of plakoglobin in both the desmosomes and in the intermediate junctions suggests that it plays a central role in the structure and function of submembranous plaques.</text>
</comment>
<comment type="subunit">
    <text>Homodimer.</text>
</comment>
<comment type="subcellular location">
    <subcellularLocation>
        <location evidence="2">Cell junction</location>
        <location evidence="2">Adherens junction</location>
    </subcellularLocation>
    <subcellularLocation>
        <location evidence="2">Cell junction</location>
        <location evidence="2">Desmosome</location>
    </subcellularLocation>
    <subcellularLocation>
        <location evidence="1">Cytoplasm</location>
        <location evidence="1">Cytoskeleton</location>
    </subcellularLocation>
    <subcellularLocation>
        <location>Membrane</location>
        <topology>Peripheral membrane protein</topology>
    </subcellularLocation>
    <subcellularLocation>
        <location evidence="2">Cytoplasm</location>
    </subcellularLocation>
    <text>Cytoplasmic in a soluble and membrane-associated form.</text>
</comment>
<comment type="similarity">
    <text evidence="3">Belongs to the beta-catenin family.</text>
</comment>